<gene>
    <name evidence="1" type="primary">trmA</name>
    <name type="ordered locus">YPTB0124</name>
</gene>
<reference key="1">
    <citation type="journal article" date="2004" name="Proc. Natl. Acad. Sci. U.S.A.">
        <title>Insights into the evolution of Yersinia pestis through whole-genome comparison with Yersinia pseudotuberculosis.</title>
        <authorList>
            <person name="Chain P.S.G."/>
            <person name="Carniel E."/>
            <person name="Larimer F.W."/>
            <person name="Lamerdin J."/>
            <person name="Stoutland P.O."/>
            <person name="Regala W.M."/>
            <person name="Georgescu A.M."/>
            <person name="Vergez L.M."/>
            <person name="Land M.L."/>
            <person name="Motin V.L."/>
            <person name="Brubaker R.R."/>
            <person name="Fowler J."/>
            <person name="Hinnebusch J."/>
            <person name="Marceau M."/>
            <person name="Medigue C."/>
            <person name="Simonet M."/>
            <person name="Chenal-Francisque V."/>
            <person name="Souza B."/>
            <person name="Dacheux D."/>
            <person name="Elliott J.M."/>
            <person name="Derbise A."/>
            <person name="Hauser L.J."/>
            <person name="Garcia E."/>
        </authorList>
    </citation>
    <scope>NUCLEOTIDE SEQUENCE [LARGE SCALE GENOMIC DNA]</scope>
    <source>
        <strain>IP32953</strain>
    </source>
</reference>
<proteinExistence type="inferred from homology"/>
<sequence>MTPNILPIESYDHQLAEKSARLKAMMLPFQAPEPEIFRSPADHYRMRAEFRVWHDEDDLYHIMFDQQTKQRIRVEQFPVASRLINRLMDALMTAIRAEPLLRRKLFQIDYLSTLSGKLIASLLYHRQLDEEWQQKALELRDQLRAQGFDLQLIGRAAKTKIMLDHDYIDEVLPVAGREMIYRQVENSFTQPNAAVNIHMLEWALDVTQGATGDLLELYCGNGNFSLALARNFERVLATEIAKPSVAAAQYNIAANNIDNVQIIRMSAEEFTQAMQGVREFNRLKGIDLGSYNCETIFVDPPRSGLDHETVKLVQAYPRILYISCNPETLCANLEQLQHTHKISRLALFDQFPYTHHMECGVLLEKRH</sequence>
<comment type="function">
    <text evidence="1">Dual-specificity methyltransferase that catalyzes the formation of 5-methyluridine at position 54 (m5U54) in all tRNAs, and that of position 341 (m5U341) in tmRNA (transfer-mRNA).</text>
</comment>
<comment type="catalytic activity">
    <reaction evidence="1">
        <text>uridine(54) in tRNA + S-adenosyl-L-methionine = 5-methyluridine(54) in tRNA + S-adenosyl-L-homocysteine + H(+)</text>
        <dbReference type="Rhea" id="RHEA:42712"/>
        <dbReference type="Rhea" id="RHEA-COMP:10167"/>
        <dbReference type="Rhea" id="RHEA-COMP:10193"/>
        <dbReference type="ChEBI" id="CHEBI:15378"/>
        <dbReference type="ChEBI" id="CHEBI:57856"/>
        <dbReference type="ChEBI" id="CHEBI:59789"/>
        <dbReference type="ChEBI" id="CHEBI:65315"/>
        <dbReference type="ChEBI" id="CHEBI:74447"/>
        <dbReference type="EC" id="2.1.1.35"/>
    </reaction>
</comment>
<comment type="catalytic activity">
    <reaction evidence="1">
        <text>uridine(341) in tmRNA + S-adenosyl-L-methionine = 5-methyluridine(341) in tmRNA + S-adenosyl-L-homocysteine + H(+)</text>
        <dbReference type="Rhea" id="RHEA:43612"/>
        <dbReference type="Rhea" id="RHEA-COMP:10630"/>
        <dbReference type="Rhea" id="RHEA-COMP:10631"/>
        <dbReference type="ChEBI" id="CHEBI:15378"/>
        <dbReference type="ChEBI" id="CHEBI:57856"/>
        <dbReference type="ChEBI" id="CHEBI:59789"/>
        <dbReference type="ChEBI" id="CHEBI:65315"/>
        <dbReference type="ChEBI" id="CHEBI:74447"/>
    </reaction>
</comment>
<comment type="similarity">
    <text evidence="1">Belongs to the class I-like SAM-binding methyltransferase superfamily. RNA M5U methyltransferase family. TrmA subfamily.</text>
</comment>
<keyword id="KW-0489">Methyltransferase</keyword>
<keyword id="KW-0949">S-adenosyl-L-methionine</keyword>
<keyword id="KW-0808">Transferase</keyword>
<keyword id="KW-0819">tRNA processing</keyword>
<dbReference type="EC" id="2.1.1.-" evidence="1"/>
<dbReference type="EC" id="2.1.1.35" evidence="1"/>
<dbReference type="EMBL" id="BX936398">
    <property type="protein sequence ID" value="CAH19364.1"/>
    <property type="molecule type" value="Genomic_DNA"/>
</dbReference>
<dbReference type="RefSeq" id="WP_002209474.1">
    <property type="nucleotide sequence ID" value="NZ_CP009712.1"/>
</dbReference>
<dbReference type="SMR" id="Q66G58"/>
<dbReference type="GeneID" id="57974789"/>
<dbReference type="KEGG" id="ypo:BZ17_2472"/>
<dbReference type="KEGG" id="yps:YPTB0124"/>
<dbReference type="PATRIC" id="fig|273123.14.peg.2591"/>
<dbReference type="Proteomes" id="UP000001011">
    <property type="component" value="Chromosome"/>
</dbReference>
<dbReference type="GO" id="GO:0005829">
    <property type="term" value="C:cytosol"/>
    <property type="evidence" value="ECO:0007669"/>
    <property type="project" value="TreeGrafter"/>
</dbReference>
<dbReference type="GO" id="GO:0019843">
    <property type="term" value="F:rRNA binding"/>
    <property type="evidence" value="ECO:0007669"/>
    <property type="project" value="TreeGrafter"/>
</dbReference>
<dbReference type="GO" id="GO:0030697">
    <property type="term" value="F:tRNA (uracil(54)-C5)-methyltransferase activity, S-adenosyl methionine-dependent"/>
    <property type="evidence" value="ECO:0007669"/>
    <property type="project" value="UniProtKB-UniRule"/>
</dbReference>
<dbReference type="GO" id="GO:0000049">
    <property type="term" value="F:tRNA binding"/>
    <property type="evidence" value="ECO:0007669"/>
    <property type="project" value="TreeGrafter"/>
</dbReference>
<dbReference type="GO" id="GO:0030488">
    <property type="term" value="P:tRNA methylation"/>
    <property type="evidence" value="ECO:0007669"/>
    <property type="project" value="UniProtKB-UniRule"/>
</dbReference>
<dbReference type="CDD" id="cd02440">
    <property type="entry name" value="AdoMet_MTases"/>
    <property type="match status" value="1"/>
</dbReference>
<dbReference type="FunFam" id="2.40.50.1070:FF:000001">
    <property type="entry name" value="tRNA/tmRNA (uracil-C(5))-methyltransferase"/>
    <property type="match status" value="1"/>
</dbReference>
<dbReference type="FunFam" id="3.40.50.150:FF:000012">
    <property type="entry name" value="tRNA/tmRNA (uracil-C(5))-methyltransferase"/>
    <property type="match status" value="1"/>
</dbReference>
<dbReference type="Gene3D" id="2.40.50.1070">
    <property type="match status" value="1"/>
</dbReference>
<dbReference type="Gene3D" id="3.40.50.150">
    <property type="entry name" value="Vaccinia Virus protein VP39"/>
    <property type="match status" value="1"/>
</dbReference>
<dbReference type="HAMAP" id="MF_01011">
    <property type="entry name" value="RNA_methyltr_TrmA"/>
    <property type="match status" value="1"/>
</dbReference>
<dbReference type="InterPro" id="IPR030390">
    <property type="entry name" value="MeTrfase_TrmA_AS"/>
</dbReference>
<dbReference type="InterPro" id="IPR030391">
    <property type="entry name" value="MeTrfase_TrmA_CS"/>
</dbReference>
<dbReference type="InterPro" id="IPR029063">
    <property type="entry name" value="SAM-dependent_MTases_sf"/>
</dbReference>
<dbReference type="InterPro" id="IPR011869">
    <property type="entry name" value="TrmA_MeTrfase"/>
</dbReference>
<dbReference type="InterPro" id="IPR010280">
    <property type="entry name" value="U5_MeTrfase_fam"/>
</dbReference>
<dbReference type="NCBIfam" id="TIGR02143">
    <property type="entry name" value="trmA_only"/>
    <property type="match status" value="1"/>
</dbReference>
<dbReference type="PANTHER" id="PTHR47790">
    <property type="entry name" value="TRNA/TMRNA (URACIL-C(5))-METHYLTRANSFERASE"/>
    <property type="match status" value="1"/>
</dbReference>
<dbReference type="PANTHER" id="PTHR47790:SF2">
    <property type="entry name" value="TRNA_TMRNA (URACIL-C(5))-METHYLTRANSFERASE"/>
    <property type="match status" value="1"/>
</dbReference>
<dbReference type="Pfam" id="PF05958">
    <property type="entry name" value="tRNA_U5-meth_tr"/>
    <property type="match status" value="1"/>
</dbReference>
<dbReference type="SUPFAM" id="SSF53335">
    <property type="entry name" value="S-adenosyl-L-methionine-dependent methyltransferases"/>
    <property type="match status" value="1"/>
</dbReference>
<dbReference type="PROSITE" id="PS51687">
    <property type="entry name" value="SAM_MT_RNA_M5U"/>
    <property type="match status" value="1"/>
</dbReference>
<dbReference type="PROSITE" id="PS01230">
    <property type="entry name" value="TRMA_1"/>
    <property type="match status" value="1"/>
</dbReference>
<dbReference type="PROSITE" id="PS01231">
    <property type="entry name" value="TRMA_2"/>
    <property type="match status" value="1"/>
</dbReference>
<protein>
    <recommendedName>
        <fullName evidence="1">tRNA/tmRNA (uracil-C(5))-methyltransferase</fullName>
        <ecNumber evidence="1">2.1.1.-</ecNumber>
        <ecNumber evidence="1">2.1.1.35</ecNumber>
    </recommendedName>
    <alternativeName>
        <fullName evidence="1">tRNA (uracil(54)-C(5))-methyltransferase</fullName>
    </alternativeName>
    <alternativeName>
        <fullName evidence="1">tRNA(m5U54)-methyltransferase</fullName>
        <shortName evidence="1">RUMT</shortName>
    </alternativeName>
    <alternativeName>
        <fullName evidence="1">tmRNA (uracil(341)-C(5))-methyltransferase</fullName>
    </alternativeName>
</protein>
<evidence type="ECO:0000255" key="1">
    <source>
        <dbReference type="HAMAP-Rule" id="MF_01011"/>
    </source>
</evidence>
<organism>
    <name type="scientific">Yersinia pseudotuberculosis serotype I (strain IP32953)</name>
    <dbReference type="NCBI Taxonomy" id="273123"/>
    <lineage>
        <taxon>Bacteria</taxon>
        <taxon>Pseudomonadati</taxon>
        <taxon>Pseudomonadota</taxon>
        <taxon>Gammaproteobacteria</taxon>
        <taxon>Enterobacterales</taxon>
        <taxon>Yersiniaceae</taxon>
        <taxon>Yersinia</taxon>
    </lineage>
</organism>
<name>TRMA_YERPS</name>
<accession>Q66G58</accession>
<feature type="chain" id="PRO_0000161885" description="tRNA/tmRNA (uracil-C(5))-methyltransferase">
    <location>
        <begin position="1"/>
        <end position="367"/>
    </location>
</feature>
<feature type="active site" description="Nucleophile" evidence="1">
    <location>
        <position position="324"/>
    </location>
</feature>
<feature type="active site" description="Proton acceptor" evidence="1">
    <location>
        <position position="358"/>
    </location>
</feature>
<feature type="binding site" evidence="1">
    <location>
        <position position="190"/>
    </location>
    <ligand>
        <name>S-adenosyl-L-methionine</name>
        <dbReference type="ChEBI" id="CHEBI:59789"/>
    </ligand>
</feature>
<feature type="binding site" evidence="1">
    <location>
        <position position="218"/>
    </location>
    <ligand>
        <name>S-adenosyl-L-methionine</name>
        <dbReference type="ChEBI" id="CHEBI:59789"/>
    </ligand>
</feature>
<feature type="binding site" evidence="1">
    <location>
        <position position="223"/>
    </location>
    <ligand>
        <name>S-adenosyl-L-methionine</name>
        <dbReference type="ChEBI" id="CHEBI:59789"/>
    </ligand>
</feature>
<feature type="binding site" evidence="1">
    <location>
        <position position="239"/>
    </location>
    <ligand>
        <name>S-adenosyl-L-methionine</name>
        <dbReference type="ChEBI" id="CHEBI:59789"/>
    </ligand>
</feature>
<feature type="binding site" evidence="1">
    <location>
        <position position="299"/>
    </location>
    <ligand>
        <name>S-adenosyl-L-methionine</name>
        <dbReference type="ChEBI" id="CHEBI:59789"/>
    </ligand>
</feature>